<protein>
    <recommendedName>
        <fullName evidence="1">DNA polymerase III PolC-type</fullName>
        <shortName evidence="1">PolIII</shortName>
        <ecNumber evidence="1">2.7.7.7</ecNumber>
    </recommendedName>
</protein>
<sequence length="1436" mass="162460">MTEQQKFKVLADQIKISNQLDAEILNSGELTRIDVSNKNRTWEFHITLPQFLAHEDYLLFINAIEQEFKDIANVTCRFTVTNGTNQDEHAIKYFGHCIDQTALSPKVKGQLKQKKLIMSGKVLKVMVSNDIERNHFDKACNGSLIKAFRNCGFDIDKIIFETNDNDQEQNLASLEAHIQEEDEQSARLATEKLEKMKAEKAKQQDNNESAVDKCQIGKPIQIENIKPIESIIEEEFKVAIEGVIFDINLKELKSGRHIVEIKVTDYTDSLVLKMFTRKNKDDLEHFKALSVGKWVRAQGRIEEDTFIRDLVMMMSDIEEIKKATKKDKAEEKRVEFHLHTAMSQMDGIPNIGAYVKQAADWGHPAIAVTDHNVVQAFPDAHAAAEKHGIKMIYGMEGMLVDDGVPIAYKPQDVVLKDATYVVFDVETTGLSNQYDKIIELAAVKVHNGEIIDKFERFSNPHERLSETIINLTHITDDMLVDAPEIEEVLTEFKEWVGDAIFVAHNASFDMGFIDTGYERLGFGPSTNGVIDTLELSRTINTEYGKHGLNFLAKKYGVELTQHHRAIYDTEATAYIFIKMVQQMKELGVLNHNEINKKLSNEDAYKRARPSHVTLIVQNQQGLKNLFKIVSASLVKYFYRTPRIPRSLLDEYREGLLVGTACDEGELFTAVMQKDQSQVEKIAKYYDFIEIQPPALYQDLIDRELIRDTETLHEIYQRLIHAGDTAGIPVIATGNAHYLFEHDGIARKILIASQPGNPLNRSTLPEAHFRTTDEMLNEFHFLGEEKAHEIVVKNTNELADRIERVVPIKDELYTPRMEGANEEIRELSYANARKLYGEDLPQIVIDRLEKELKSIIGNGFAVIYLISQRLVKKSLDDGYLVGSRGSVGSSFVATMTEITEVNPLPPHYICPNCKTSEFFNDGSVGSGFDLPDKTCETCGAPLIKEGQDIPFETFLGFKGDKVPDIDLNFSGEYQPNAHNYTKVLFGEDKVFRAGTIGTVAEKTAFGYVKGYLNDQGIHKRGAEIDRLVKGCTGVKRTTGQHPGGIIVVPDYMDIYDFTPIQYPADDQNSAWMTTHFDFHSIHDNVLKLDILGHDDPTMIRMLQDLSGIDPKTIPVDDKEVMQIFSTPESLGVTEDEILCKTGTFGVPEFGTGFVRQMLEDTKPTTFSELVQISGLSHGTDVWLGNAQELIKTGICDLSSVIGCRDDIMVYLMYAGLEPSMAFKIMESVRKGKGLTEEMIETMKENEVPDWYLDSCLKIKYMFPKAHAAAYVLMAVRIAYFKVHHPLYYYASYFTIRASDFDLITMIKDKTSIRNTVKDMYSRYMDLGKKEKDVLTVLEIMNEMAHRGYRMQPISLEKSQAFEFIIEGDTLIPPFISVPGLGENVAKRIVEARDDGPFLSKEDLNKKAGLSQKIIEYLDELGSLPNLPDKAQLSIFDM</sequence>
<name>DPO3_STAA8</name>
<gene>
    <name evidence="1" type="primary">polC</name>
    <name type="ordered locus">SAOUHSC_01241</name>
</gene>
<dbReference type="EC" id="2.7.7.7" evidence="1"/>
<dbReference type="EMBL" id="AB053353">
    <property type="protein sequence ID" value="BAB20885.1"/>
    <property type="molecule type" value="Genomic_DNA"/>
</dbReference>
<dbReference type="EMBL" id="CP000253">
    <property type="protein sequence ID" value="ABD30342.1"/>
    <property type="molecule type" value="Genomic_DNA"/>
</dbReference>
<dbReference type="RefSeq" id="WP_001820550.1">
    <property type="nucleotide sequence ID" value="NZ_LS483365.1"/>
</dbReference>
<dbReference type="RefSeq" id="YP_499774.1">
    <property type="nucleotide sequence ID" value="NC_007795.1"/>
</dbReference>
<dbReference type="SMR" id="Q2G1Z8"/>
<dbReference type="STRING" id="93061.SAOUHSC_01241"/>
<dbReference type="PaxDb" id="1280-SAXN108_1268"/>
<dbReference type="GeneID" id="3920266"/>
<dbReference type="KEGG" id="sao:SAOUHSC_01241"/>
<dbReference type="PATRIC" id="fig|93061.5.peg.1135"/>
<dbReference type="eggNOG" id="COG2176">
    <property type="taxonomic scope" value="Bacteria"/>
</dbReference>
<dbReference type="HOGENOM" id="CLU_003297_2_0_9"/>
<dbReference type="OrthoDB" id="9804290at2"/>
<dbReference type="Proteomes" id="UP000008816">
    <property type="component" value="Chromosome"/>
</dbReference>
<dbReference type="GO" id="GO:0005737">
    <property type="term" value="C:cytoplasm"/>
    <property type="evidence" value="ECO:0007669"/>
    <property type="project" value="UniProtKB-SubCell"/>
</dbReference>
<dbReference type="GO" id="GO:0008408">
    <property type="term" value="F:3'-5' exonuclease activity"/>
    <property type="evidence" value="ECO:0007669"/>
    <property type="project" value="UniProtKB-UniRule"/>
</dbReference>
<dbReference type="GO" id="GO:0003677">
    <property type="term" value="F:DNA binding"/>
    <property type="evidence" value="ECO:0007669"/>
    <property type="project" value="UniProtKB-UniRule"/>
</dbReference>
<dbReference type="GO" id="GO:0003887">
    <property type="term" value="F:DNA-directed DNA polymerase activity"/>
    <property type="evidence" value="ECO:0000318"/>
    <property type="project" value="GO_Central"/>
</dbReference>
<dbReference type="GO" id="GO:0006261">
    <property type="term" value="P:DNA-templated DNA replication"/>
    <property type="evidence" value="ECO:0007669"/>
    <property type="project" value="UniProtKB-UniRule"/>
</dbReference>
<dbReference type="CDD" id="cd06127">
    <property type="entry name" value="DEDDh"/>
    <property type="match status" value="1"/>
</dbReference>
<dbReference type="CDD" id="cd07435">
    <property type="entry name" value="PHP_PolIIIA_POLC"/>
    <property type="match status" value="1"/>
</dbReference>
<dbReference type="CDD" id="cd04484">
    <property type="entry name" value="polC_OBF"/>
    <property type="match status" value="1"/>
</dbReference>
<dbReference type="FunFam" id="3.30.420.10:FF:000045">
    <property type="entry name" value="3'-5' exonuclease DinG"/>
    <property type="match status" value="1"/>
</dbReference>
<dbReference type="Gene3D" id="1.10.150.870">
    <property type="match status" value="1"/>
</dbReference>
<dbReference type="Gene3D" id="3.30.1900.20">
    <property type="match status" value="2"/>
</dbReference>
<dbReference type="Gene3D" id="6.10.140.1510">
    <property type="match status" value="1"/>
</dbReference>
<dbReference type="Gene3D" id="3.20.20.140">
    <property type="entry name" value="Metal-dependent hydrolases"/>
    <property type="match status" value="1"/>
</dbReference>
<dbReference type="Gene3D" id="2.40.50.140">
    <property type="entry name" value="Nucleic acid-binding proteins"/>
    <property type="match status" value="1"/>
</dbReference>
<dbReference type="Gene3D" id="1.10.150.700">
    <property type="entry name" value="PolC, middle finger domain"/>
    <property type="match status" value="1"/>
</dbReference>
<dbReference type="Gene3D" id="3.30.420.10">
    <property type="entry name" value="Ribonuclease H-like superfamily/Ribonuclease H"/>
    <property type="match status" value="1"/>
</dbReference>
<dbReference type="HAMAP" id="MF_00356">
    <property type="entry name" value="DNApol_PolC"/>
    <property type="match status" value="1"/>
</dbReference>
<dbReference type="InterPro" id="IPR011708">
    <property type="entry name" value="DNA_pol3_alpha_NTPase_dom"/>
</dbReference>
<dbReference type="InterPro" id="IPR040982">
    <property type="entry name" value="DNA_pol3_finger"/>
</dbReference>
<dbReference type="InterPro" id="IPR024754">
    <property type="entry name" value="DNA_PolC-like_N_II"/>
</dbReference>
<dbReference type="InterPro" id="IPR028112">
    <property type="entry name" value="DNA_PolC-type_N_I"/>
</dbReference>
<dbReference type="InterPro" id="IPR004805">
    <property type="entry name" value="DnaE2/DnaE/PolC"/>
</dbReference>
<dbReference type="InterPro" id="IPR029460">
    <property type="entry name" value="DNAPol_HHH"/>
</dbReference>
<dbReference type="InterPro" id="IPR006054">
    <property type="entry name" value="DnaQ"/>
</dbReference>
<dbReference type="InterPro" id="IPR013520">
    <property type="entry name" value="Exonuclease_RNaseT/DNA_pol3"/>
</dbReference>
<dbReference type="InterPro" id="IPR012340">
    <property type="entry name" value="NA-bd_OB-fold"/>
</dbReference>
<dbReference type="InterPro" id="IPR004013">
    <property type="entry name" value="PHP_dom"/>
</dbReference>
<dbReference type="InterPro" id="IPR003141">
    <property type="entry name" value="Pol/His_phosphatase_N"/>
</dbReference>
<dbReference type="InterPro" id="IPR006308">
    <property type="entry name" value="Pol_III_a_PolC-type_gram_pos"/>
</dbReference>
<dbReference type="InterPro" id="IPR044923">
    <property type="entry name" value="PolC_middle_finger_sf"/>
</dbReference>
<dbReference type="InterPro" id="IPR012337">
    <property type="entry name" value="RNaseH-like_sf"/>
</dbReference>
<dbReference type="InterPro" id="IPR036397">
    <property type="entry name" value="RNaseH_sf"/>
</dbReference>
<dbReference type="NCBIfam" id="TIGR00573">
    <property type="entry name" value="dnaq"/>
    <property type="match status" value="1"/>
</dbReference>
<dbReference type="NCBIfam" id="TIGR01405">
    <property type="entry name" value="polC_Gram_pos"/>
    <property type="match status" value="1"/>
</dbReference>
<dbReference type="NCBIfam" id="NF001688">
    <property type="entry name" value="PRK00448.1"/>
    <property type="match status" value="1"/>
</dbReference>
<dbReference type="PANTHER" id="PTHR32294:SF5">
    <property type="entry name" value="DNA POLYMERASE III POLC-TYPE"/>
    <property type="match status" value="1"/>
</dbReference>
<dbReference type="PANTHER" id="PTHR32294">
    <property type="entry name" value="DNA POLYMERASE III SUBUNIT ALPHA"/>
    <property type="match status" value="1"/>
</dbReference>
<dbReference type="Pfam" id="PF14480">
    <property type="entry name" value="DNA_pol3_a_NI"/>
    <property type="match status" value="1"/>
</dbReference>
<dbReference type="Pfam" id="PF11490">
    <property type="entry name" value="DNA_pol3_a_NII"/>
    <property type="match status" value="1"/>
</dbReference>
<dbReference type="Pfam" id="PF07733">
    <property type="entry name" value="DNA_pol3_alpha"/>
    <property type="match status" value="2"/>
</dbReference>
<dbReference type="Pfam" id="PF17657">
    <property type="entry name" value="DNA_pol3_finger"/>
    <property type="match status" value="1"/>
</dbReference>
<dbReference type="Pfam" id="PF14579">
    <property type="entry name" value="HHH_6"/>
    <property type="match status" value="1"/>
</dbReference>
<dbReference type="Pfam" id="PF02811">
    <property type="entry name" value="PHP"/>
    <property type="match status" value="2"/>
</dbReference>
<dbReference type="Pfam" id="PF00929">
    <property type="entry name" value="RNase_T"/>
    <property type="match status" value="1"/>
</dbReference>
<dbReference type="SMART" id="SM00479">
    <property type="entry name" value="EXOIII"/>
    <property type="match status" value="1"/>
</dbReference>
<dbReference type="SMART" id="SM00481">
    <property type="entry name" value="POLIIIAc"/>
    <property type="match status" value="1"/>
</dbReference>
<dbReference type="SUPFAM" id="SSF81585">
    <property type="entry name" value="PsbU/PolX domain-like"/>
    <property type="match status" value="1"/>
</dbReference>
<dbReference type="SUPFAM" id="SSF53098">
    <property type="entry name" value="Ribonuclease H-like"/>
    <property type="match status" value="1"/>
</dbReference>
<keyword id="KW-0963">Cytoplasm</keyword>
<keyword id="KW-0235">DNA replication</keyword>
<keyword id="KW-0239">DNA-directed DNA polymerase</keyword>
<keyword id="KW-0269">Exonuclease</keyword>
<keyword id="KW-0378">Hydrolase</keyword>
<keyword id="KW-0540">Nuclease</keyword>
<keyword id="KW-0548">Nucleotidyltransferase</keyword>
<keyword id="KW-1185">Reference proteome</keyword>
<keyword id="KW-0808">Transferase</keyword>
<organism>
    <name type="scientific">Staphylococcus aureus (strain NCTC 8325 / PS 47)</name>
    <dbReference type="NCBI Taxonomy" id="93061"/>
    <lineage>
        <taxon>Bacteria</taxon>
        <taxon>Bacillati</taxon>
        <taxon>Bacillota</taxon>
        <taxon>Bacilli</taxon>
        <taxon>Bacillales</taxon>
        <taxon>Staphylococcaceae</taxon>
        <taxon>Staphylococcus</taxon>
    </lineage>
</organism>
<feature type="chain" id="PRO_0000247016" description="DNA polymerase III PolC-type">
    <location>
        <begin position="1"/>
        <end position="1436"/>
    </location>
</feature>
<feature type="domain" description="Exonuclease">
    <location>
        <begin position="420"/>
        <end position="576"/>
    </location>
</feature>
<comment type="function">
    <text>Required for replicative DNA synthesis. This DNA polymerase also exhibits 3' to 5' exonuclease activity.</text>
</comment>
<comment type="catalytic activity">
    <reaction evidence="1">
        <text>DNA(n) + a 2'-deoxyribonucleoside 5'-triphosphate = DNA(n+1) + diphosphate</text>
        <dbReference type="Rhea" id="RHEA:22508"/>
        <dbReference type="Rhea" id="RHEA-COMP:17339"/>
        <dbReference type="Rhea" id="RHEA-COMP:17340"/>
        <dbReference type="ChEBI" id="CHEBI:33019"/>
        <dbReference type="ChEBI" id="CHEBI:61560"/>
        <dbReference type="ChEBI" id="CHEBI:173112"/>
        <dbReference type="EC" id="2.7.7.7"/>
    </reaction>
</comment>
<comment type="subcellular location">
    <subcellularLocation>
        <location evidence="1">Cytoplasm</location>
    </subcellularLocation>
</comment>
<comment type="similarity">
    <text evidence="1">Belongs to the DNA polymerase type-C family. PolC subfamily.</text>
</comment>
<accession>Q2G1Z8</accession>
<accession>P68851</accession>
<accession>Q53665</accession>
<accession>Q57110</accession>
<accession>Q9F1J9</accession>
<proteinExistence type="inferred from homology"/>
<reference key="1">
    <citation type="journal article" date="2001" name="Mol. Genet. Genomics">
        <title>Genetic identification of two distinct DNA polymerases, DnaE and PolC, that are essential for chromosomal DNA replication in Staphylococcus aureus.</title>
        <authorList>
            <person name="Inoue R."/>
            <person name="Kaito C."/>
            <person name="Tanabe M."/>
            <person name="Kamura K."/>
            <person name="Akimitsu N."/>
            <person name="Sekimizu K."/>
        </authorList>
    </citation>
    <scope>NUCLEOTIDE SEQUENCE [GENOMIC DNA]</scope>
</reference>
<reference key="2">
    <citation type="book" date="2006" name="Gram positive pathogens, 2nd edition">
        <title>The Staphylococcus aureus NCTC 8325 genome.</title>
        <editorList>
            <person name="Fischetti V."/>
            <person name="Novick R."/>
            <person name="Ferretti J."/>
            <person name="Portnoy D."/>
            <person name="Rood J."/>
        </editorList>
        <authorList>
            <person name="Gillaspy A.F."/>
            <person name="Worrell V."/>
            <person name="Orvis J."/>
            <person name="Roe B.A."/>
            <person name="Dyer D.W."/>
            <person name="Iandolo J.J."/>
        </authorList>
    </citation>
    <scope>NUCLEOTIDE SEQUENCE [LARGE SCALE GENOMIC DNA]</scope>
    <source>
        <strain>NCTC 8325 / PS 47</strain>
    </source>
</reference>
<evidence type="ECO:0000255" key="1">
    <source>
        <dbReference type="HAMAP-Rule" id="MF_00356"/>
    </source>
</evidence>